<accession>Q94GF1</accession>
<accession>A0A0P0W4Y1</accession>
<accession>Q10B97</accession>
<accession>Q9XJ30</accession>
<feature type="transit peptide" description="Chloroplast" evidence="2">
    <location>
        <begin position="1"/>
        <end position="34"/>
    </location>
</feature>
<feature type="chain" id="PRO_0000425662" description="Anthranilate synthase alpha subunit 1, chloroplastic">
    <location>
        <begin position="35"/>
        <end position="577"/>
    </location>
</feature>
<feature type="mutagenesis site" description="Insensitive to feedback inhibition by tryptophan." evidence="3">
    <original>D</original>
    <variation>N</variation>
    <location>
        <position position="323"/>
    </location>
</feature>
<feature type="sequence conflict" description="In Ref. 1; BAA82094." evidence="6" ref="1">
    <original>P</original>
    <variation>R</variation>
    <location>
        <position position="12"/>
    </location>
</feature>
<feature type="sequence conflict" description="In Ref. 1; BAA82094." evidence="6" ref="1">
    <original>D</original>
    <variation>H</variation>
    <location>
        <position position="169"/>
    </location>
</feature>
<evidence type="ECO:0000250" key="1">
    <source>
        <dbReference type="UniProtKB" id="P00897"/>
    </source>
</evidence>
<evidence type="ECO:0000255" key="2"/>
<evidence type="ECO:0000269" key="3">
    <source>
    </source>
</evidence>
<evidence type="ECO:0000269" key="4">
    <source>
    </source>
</evidence>
<evidence type="ECO:0000303" key="5">
    <source>
    </source>
</evidence>
<evidence type="ECO:0000305" key="6"/>
<evidence type="ECO:0000312" key="7">
    <source>
        <dbReference type="EMBL" id="AAK82452.1"/>
    </source>
</evidence>
<evidence type="ECO:0000312" key="8">
    <source>
        <dbReference type="EMBL" id="AAL79757.1"/>
    </source>
</evidence>
<evidence type="ECO:0000312" key="9">
    <source>
        <dbReference type="EMBL" id="EAZ29134.1"/>
    </source>
</evidence>
<proteinExistence type="evidence at protein level"/>
<reference key="1">
    <citation type="journal article" date="2001" name="Plant Physiol.">
        <title>Characterization of rice anthranilate synthase alpha-subunit genes OASA1 and OASA2. Tryptophan accumulation in transgenic rice expressing a feedback-insensitive mutant of OASA1.</title>
        <authorList>
            <person name="Tozawa Y."/>
            <person name="Hasegawa H."/>
            <person name="Terakawa T."/>
            <person name="Wakasa K."/>
        </authorList>
    </citation>
    <scope>NUCLEOTIDE SEQUENCE [MRNA]</scope>
    <scope>FUNCTION</scope>
    <scope>ACTIVITY REGULATION</scope>
    <scope>DISRUPTION PHENOTYPE</scope>
    <scope>MUTAGENESIS OF ASP-323</scope>
    <source>
        <strain>cv. Nipponbare</strain>
    </source>
</reference>
<reference key="2">
    <citation type="journal article" date="2005" name="Genome Res.">
        <title>Sequence, annotation, and analysis of synteny between rice chromosome 3 and diverged grass species.</title>
        <authorList>
            <consortium name="The rice chromosome 3 sequencing consortium"/>
            <person name="Buell C.R."/>
            <person name="Yuan Q."/>
            <person name="Ouyang S."/>
            <person name="Liu J."/>
            <person name="Zhu W."/>
            <person name="Wang A."/>
            <person name="Maiti R."/>
            <person name="Haas B."/>
            <person name="Wortman J."/>
            <person name="Pertea M."/>
            <person name="Jones K.M."/>
            <person name="Kim M."/>
            <person name="Overton L."/>
            <person name="Tsitrin T."/>
            <person name="Fadrosh D."/>
            <person name="Bera J."/>
            <person name="Weaver B."/>
            <person name="Jin S."/>
            <person name="Johri S."/>
            <person name="Reardon M."/>
            <person name="Webb K."/>
            <person name="Hill J."/>
            <person name="Moffat K."/>
            <person name="Tallon L."/>
            <person name="Van Aken S."/>
            <person name="Lewis M."/>
            <person name="Utterback T."/>
            <person name="Feldblyum T."/>
            <person name="Zismann V."/>
            <person name="Iobst S."/>
            <person name="Hsiao J."/>
            <person name="de Vazeille A.R."/>
            <person name="Salzberg S.L."/>
            <person name="White O."/>
            <person name="Fraser C.M."/>
            <person name="Yu Y."/>
            <person name="Kim H."/>
            <person name="Rambo T."/>
            <person name="Currie J."/>
            <person name="Collura K."/>
            <person name="Kernodle-Thompson S."/>
            <person name="Wei F."/>
            <person name="Kudrna K."/>
            <person name="Ammiraju J.S.S."/>
            <person name="Luo M."/>
            <person name="Goicoechea J.L."/>
            <person name="Wing R.A."/>
            <person name="Henry D."/>
            <person name="Oates R."/>
            <person name="Palmer M."/>
            <person name="Pries G."/>
            <person name="Saski C."/>
            <person name="Simmons J."/>
            <person name="Soderlund C."/>
            <person name="Nelson W."/>
            <person name="de la Bastide M."/>
            <person name="Spiegel L."/>
            <person name="Nascimento L."/>
            <person name="Huang E."/>
            <person name="Preston R."/>
            <person name="Zutavern T."/>
            <person name="Palmer L."/>
            <person name="O'Shaughnessy A."/>
            <person name="Dike S."/>
            <person name="McCombie W.R."/>
            <person name="Minx P."/>
            <person name="Cordum H."/>
            <person name="Wilson R."/>
            <person name="Jin W."/>
            <person name="Lee H.R."/>
            <person name="Jiang J."/>
            <person name="Jackson S."/>
        </authorList>
    </citation>
    <scope>NUCLEOTIDE SEQUENCE [LARGE SCALE GENOMIC DNA]</scope>
    <source>
        <strain>cv. Nipponbare</strain>
    </source>
</reference>
<reference key="3">
    <citation type="journal article" date="2005" name="Nature">
        <title>The map-based sequence of the rice genome.</title>
        <authorList>
            <consortium name="International rice genome sequencing project (IRGSP)"/>
        </authorList>
    </citation>
    <scope>NUCLEOTIDE SEQUENCE [LARGE SCALE GENOMIC DNA]</scope>
    <source>
        <strain>cv. Nipponbare</strain>
    </source>
</reference>
<reference key="4">
    <citation type="journal article" date="2008" name="Nucleic Acids Res.">
        <title>The rice annotation project database (RAP-DB): 2008 update.</title>
        <authorList>
            <consortium name="The rice annotation project (RAP)"/>
        </authorList>
    </citation>
    <scope>GENOME REANNOTATION</scope>
    <source>
        <strain>cv. Nipponbare</strain>
    </source>
</reference>
<reference key="5">
    <citation type="journal article" date="2013" name="Rice">
        <title>Improvement of the Oryza sativa Nipponbare reference genome using next generation sequence and optical map data.</title>
        <authorList>
            <person name="Kawahara Y."/>
            <person name="de la Bastide M."/>
            <person name="Hamilton J.P."/>
            <person name="Kanamori H."/>
            <person name="McCombie W.R."/>
            <person name="Ouyang S."/>
            <person name="Schwartz D.C."/>
            <person name="Tanaka T."/>
            <person name="Wu J."/>
            <person name="Zhou S."/>
            <person name="Childs K.L."/>
            <person name="Davidson R.M."/>
            <person name="Lin H."/>
            <person name="Quesada-Ocampo L."/>
            <person name="Vaillancourt B."/>
            <person name="Sakai H."/>
            <person name="Lee S.S."/>
            <person name="Kim J."/>
            <person name="Numa H."/>
            <person name="Itoh T."/>
            <person name="Buell C.R."/>
            <person name="Matsumoto T."/>
        </authorList>
    </citation>
    <scope>GENOME REANNOTATION</scope>
    <source>
        <strain>cv. Nipponbare</strain>
    </source>
</reference>
<reference key="6">
    <citation type="journal article" date="2005" name="PLoS Biol.">
        <title>The genomes of Oryza sativa: a history of duplications.</title>
        <authorList>
            <person name="Yu J."/>
            <person name="Wang J."/>
            <person name="Lin W."/>
            <person name="Li S."/>
            <person name="Li H."/>
            <person name="Zhou J."/>
            <person name="Ni P."/>
            <person name="Dong W."/>
            <person name="Hu S."/>
            <person name="Zeng C."/>
            <person name="Zhang J."/>
            <person name="Zhang Y."/>
            <person name="Li R."/>
            <person name="Xu Z."/>
            <person name="Li S."/>
            <person name="Li X."/>
            <person name="Zheng H."/>
            <person name="Cong L."/>
            <person name="Lin L."/>
            <person name="Yin J."/>
            <person name="Geng J."/>
            <person name="Li G."/>
            <person name="Shi J."/>
            <person name="Liu J."/>
            <person name="Lv H."/>
            <person name="Li J."/>
            <person name="Wang J."/>
            <person name="Deng Y."/>
            <person name="Ran L."/>
            <person name="Shi X."/>
            <person name="Wang X."/>
            <person name="Wu Q."/>
            <person name="Li C."/>
            <person name="Ren X."/>
            <person name="Wang J."/>
            <person name="Wang X."/>
            <person name="Li D."/>
            <person name="Liu D."/>
            <person name="Zhang X."/>
            <person name="Ji Z."/>
            <person name="Zhao W."/>
            <person name="Sun Y."/>
            <person name="Zhang Z."/>
            <person name="Bao J."/>
            <person name="Han Y."/>
            <person name="Dong L."/>
            <person name="Ji J."/>
            <person name="Chen P."/>
            <person name="Wu S."/>
            <person name="Liu J."/>
            <person name="Xiao Y."/>
            <person name="Bu D."/>
            <person name="Tan J."/>
            <person name="Yang L."/>
            <person name="Ye C."/>
            <person name="Zhang J."/>
            <person name="Xu J."/>
            <person name="Zhou Y."/>
            <person name="Yu Y."/>
            <person name="Zhang B."/>
            <person name="Zhuang S."/>
            <person name="Wei H."/>
            <person name="Liu B."/>
            <person name="Lei M."/>
            <person name="Yu H."/>
            <person name="Li Y."/>
            <person name="Xu H."/>
            <person name="Wei S."/>
            <person name="He X."/>
            <person name="Fang L."/>
            <person name="Zhang Z."/>
            <person name="Zhang Y."/>
            <person name="Huang X."/>
            <person name="Su Z."/>
            <person name="Tong W."/>
            <person name="Li J."/>
            <person name="Tong Z."/>
            <person name="Li S."/>
            <person name="Ye J."/>
            <person name="Wang L."/>
            <person name="Fang L."/>
            <person name="Lei T."/>
            <person name="Chen C.-S."/>
            <person name="Chen H.-C."/>
            <person name="Xu Z."/>
            <person name="Li H."/>
            <person name="Huang H."/>
            <person name="Zhang F."/>
            <person name="Xu H."/>
            <person name="Li N."/>
            <person name="Zhao C."/>
            <person name="Li S."/>
            <person name="Dong L."/>
            <person name="Huang Y."/>
            <person name="Li L."/>
            <person name="Xi Y."/>
            <person name="Qi Q."/>
            <person name="Li W."/>
            <person name="Zhang B."/>
            <person name="Hu W."/>
            <person name="Zhang Y."/>
            <person name="Tian X."/>
            <person name="Jiao Y."/>
            <person name="Liang X."/>
            <person name="Jin J."/>
            <person name="Gao L."/>
            <person name="Zheng W."/>
            <person name="Hao B."/>
            <person name="Liu S.-M."/>
            <person name="Wang W."/>
            <person name="Yuan L."/>
            <person name="Cao M."/>
            <person name="McDermott J."/>
            <person name="Samudrala R."/>
            <person name="Wang J."/>
            <person name="Wong G.K.-S."/>
            <person name="Yang H."/>
        </authorList>
    </citation>
    <scope>NUCLEOTIDE SEQUENCE [LARGE SCALE GENOMIC DNA]</scope>
    <source>
        <strain>cv. Nipponbare</strain>
    </source>
</reference>
<reference key="7">
    <citation type="journal article" date="2004" name="Plant Mol. Biol.">
        <title>In vitro reconstitution of rice anthranilate synthase: distinct functional properties of the alpha subunits OASA1 and OASA2.</title>
        <authorList>
            <person name="Kanno T."/>
            <person name="Kasai K."/>
            <person name="Ikejiri-Kanno Y."/>
            <person name="Wakasa K."/>
            <person name="Tozawa Y."/>
        </authorList>
    </citation>
    <scope>FUNCTION</scope>
    <scope>BIOPHYSICOCHEMICAL PROPERTIES</scope>
    <scope>CATALYTIC ACTIVITY</scope>
    <scope>PATHWAY</scope>
</reference>
<keyword id="KW-0028">Amino-acid biosynthesis</keyword>
<keyword id="KW-0057">Aromatic amino acid biosynthesis</keyword>
<keyword id="KW-0150">Chloroplast</keyword>
<keyword id="KW-0456">Lyase</keyword>
<keyword id="KW-0934">Plastid</keyword>
<keyword id="KW-1185">Reference proteome</keyword>
<keyword id="KW-0809">Transit peptide</keyword>
<keyword id="KW-0822">Tryptophan biosynthesis</keyword>
<comment type="function">
    <text evidence="3 4">Part of a heterotetrameric complex that catalyzes the two-step biosynthesis of anthranilate, an intermediate in the biosynthesis of L-tryptophan. In the first step, the glutamine-binding beta subunit of anthranilate synthase (AS) provides the glutamine amidotransferase activity which generates ammonia as a substrate that, along with chorismate, is used in the second step, catalyzed by the large alpha subunit of AS to produce anthranilate.</text>
</comment>
<comment type="catalytic activity">
    <reaction evidence="4">
        <text>chorismate + L-glutamine = anthranilate + pyruvate + L-glutamate + H(+)</text>
        <dbReference type="Rhea" id="RHEA:21732"/>
        <dbReference type="ChEBI" id="CHEBI:15361"/>
        <dbReference type="ChEBI" id="CHEBI:15378"/>
        <dbReference type="ChEBI" id="CHEBI:16567"/>
        <dbReference type="ChEBI" id="CHEBI:29748"/>
        <dbReference type="ChEBI" id="CHEBI:29985"/>
        <dbReference type="ChEBI" id="CHEBI:58359"/>
        <dbReference type="EC" id="4.1.3.27"/>
    </reaction>
    <physiologicalReaction direction="left-to-right" evidence="4">
        <dbReference type="Rhea" id="RHEA:21733"/>
    </physiologicalReaction>
</comment>
<comment type="activity regulation">
    <text evidence="3">Feedback inhibition by tryptophan.</text>
</comment>
<comment type="biophysicochemical properties">
    <kinetics>
        <KM evidence="4">121 uM for chorismate (for recombinant ASA1 and ASB1 proteins synthesized with the wheat germ cell-free system)</KM>
        <Vmax evidence="4">566.0 nmol/min/mg enzyme toward chorismate (for recombinant ASA1 and ASB1 proteins synthesized with the wheat germ cell-free system)</Vmax>
        <text evidence="4">kcat is 34.7 sec(-1) with chorismate as substrate (for recombinant ASA1 and ASB1 proteins synthesized with the wheat germ cell-free system).</text>
    </kinetics>
</comment>
<comment type="pathway">
    <text evidence="4">Amino-acid biosynthesis; L-tryptophan biosynthesis; L-tryptophan from chorismate: step 1/5.</text>
</comment>
<comment type="subunit">
    <text evidence="1">Heterotetramer consisting of two non-identical subunits: a beta subunit and a large alpha subunit.</text>
</comment>
<comment type="subcellular location">
    <subcellularLocation>
        <location evidence="2">Plastid</location>
        <location evidence="2">Chloroplast</location>
    </subcellularLocation>
</comment>
<comment type="disruption phenotype">
    <text evidence="3">No visible phenotype under normal growth conditions, but mutant plants are insensitive to feedback inhibition by tryptophan.</text>
</comment>
<comment type="similarity">
    <text evidence="6">Belongs to the anthranilate synthase component I family.</text>
</comment>
<protein>
    <recommendedName>
        <fullName evidence="5">Anthranilate synthase alpha subunit 1, chloroplastic</fullName>
        <shortName evidence="5">OsASA1</shortName>
        <ecNumber evidence="4">4.1.3.27</ecNumber>
    </recommendedName>
</protein>
<dbReference type="EC" id="4.1.3.27" evidence="4"/>
<dbReference type="EMBL" id="AB022602">
    <property type="protein sequence ID" value="BAA82094.1"/>
    <property type="molecule type" value="mRNA"/>
</dbReference>
<dbReference type="EMBL" id="AC091247">
    <property type="protein sequence ID" value="AAK82452.1"/>
    <property type="molecule type" value="Genomic_DNA"/>
</dbReference>
<dbReference type="EMBL" id="AC096687">
    <property type="protein sequence ID" value="AAL79757.1"/>
    <property type="molecule type" value="Genomic_DNA"/>
</dbReference>
<dbReference type="EMBL" id="DP000009">
    <property type="protein sequence ID" value="ABF99646.1"/>
    <property type="molecule type" value="Genomic_DNA"/>
</dbReference>
<dbReference type="EMBL" id="AP008209">
    <property type="protein sequence ID" value="BAF13678.1"/>
    <property type="molecule type" value="Genomic_DNA"/>
</dbReference>
<dbReference type="EMBL" id="AP014959">
    <property type="protein sequence ID" value="BAS87160.1"/>
    <property type="molecule type" value="Genomic_DNA"/>
</dbReference>
<dbReference type="EMBL" id="CM000140">
    <property type="protein sequence ID" value="EAZ29134.1"/>
    <property type="molecule type" value="Genomic_DNA"/>
</dbReference>
<dbReference type="RefSeq" id="XP_015628119.1">
    <property type="nucleotide sequence ID" value="XM_015772633.1"/>
</dbReference>
<dbReference type="SMR" id="Q94GF1"/>
<dbReference type="FunCoup" id="Q94GF1">
    <property type="interactions" value="672"/>
</dbReference>
<dbReference type="STRING" id="39947.Q94GF1"/>
<dbReference type="PaxDb" id="39947-Q94GF1"/>
<dbReference type="EnsemblPlants" id="Os03t0826500-01">
    <property type="protein sequence ID" value="Os03t0826500-01"/>
    <property type="gene ID" value="Os03g0826500"/>
</dbReference>
<dbReference type="Gramene" id="Os03t0826500-01">
    <property type="protein sequence ID" value="Os03t0826500-01"/>
    <property type="gene ID" value="Os03g0826500"/>
</dbReference>
<dbReference type="KEGG" id="dosa:Os03g0826500"/>
<dbReference type="eggNOG" id="KOG1223">
    <property type="taxonomic scope" value="Eukaryota"/>
</dbReference>
<dbReference type="HOGENOM" id="CLU_006493_9_3_1"/>
<dbReference type="InParanoid" id="Q94GF1"/>
<dbReference type="OMA" id="HGRMDTS"/>
<dbReference type="OrthoDB" id="1865897at2759"/>
<dbReference type="PlantReactome" id="R-OSA-1119494">
    <property type="pathway name" value="Tryptophan biosynthesis"/>
</dbReference>
<dbReference type="UniPathway" id="UPA00035">
    <property type="reaction ID" value="UER00040"/>
</dbReference>
<dbReference type="Proteomes" id="UP000000763">
    <property type="component" value="Chromosome 3"/>
</dbReference>
<dbReference type="Proteomes" id="UP000007752">
    <property type="component" value="Chromosome 3"/>
</dbReference>
<dbReference type="Proteomes" id="UP000059680">
    <property type="component" value="Chromosome 3"/>
</dbReference>
<dbReference type="GO" id="GO:0005950">
    <property type="term" value="C:anthranilate synthase complex"/>
    <property type="evidence" value="ECO:0000304"/>
    <property type="project" value="UniProtKB"/>
</dbReference>
<dbReference type="GO" id="GO:0009507">
    <property type="term" value="C:chloroplast"/>
    <property type="evidence" value="ECO:0007669"/>
    <property type="project" value="UniProtKB-SubCell"/>
</dbReference>
<dbReference type="GO" id="GO:0004049">
    <property type="term" value="F:anthranilate synthase activity"/>
    <property type="evidence" value="ECO:0000314"/>
    <property type="project" value="UniProtKB"/>
</dbReference>
<dbReference type="GO" id="GO:0000162">
    <property type="term" value="P:L-tryptophan biosynthetic process"/>
    <property type="evidence" value="ECO:0000315"/>
    <property type="project" value="UniProtKB"/>
</dbReference>
<dbReference type="FunFam" id="3.60.120.10:FF:000003">
    <property type="entry name" value="Anthranilate synthase component 1"/>
    <property type="match status" value="1"/>
</dbReference>
<dbReference type="Gene3D" id="3.60.120.10">
    <property type="entry name" value="Anthranilate synthase"/>
    <property type="match status" value="1"/>
</dbReference>
<dbReference type="InterPro" id="IPR005801">
    <property type="entry name" value="ADC_synthase"/>
</dbReference>
<dbReference type="InterPro" id="IPR019999">
    <property type="entry name" value="Anth_synth_I-like"/>
</dbReference>
<dbReference type="InterPro" id="IPR006805">
    <property type="entry name" value="Anth_synth_I_N"/>
</dbReference>
<dbReference type="InterPro" id="IPR005256">
    <property type="entry name" value="Anth_synth_I_PabB"/>
</dbReference>
<dbReference type="InterPro" id="IPR015890">
    <property type="entry name" value="Chorismate_C"/>
</dbReference>
<dbReference type="NCBIfam" id="TIGR00564">
    <property type="entry name" value="trpE_most"/>
    <property type="match status" value="1"/>
</dbReference>
<dbReference type="PANTHER" id="PTHR11236">
    <property type="entry name" value="AMINOBENZOATE/ANTHRANILATE SYNTHASE"/>
    <property type="match status" value="1"/>
</dbReference>
<dbReference type="PANTHER" id="PTHR11236:SF9">
    <property type="entry name" value="ANTHRANILATE SYNTHASE COMPONENT 1"/>
    <property type="match status" value="1"/>
</dbReference>
<dbReference type="Pfam" id="PF04715">
    <property type="entry name" value="Anth_synt_I_N"/>
    <property type="match status" value="1"/>
</dbReference>
<dbReference type="Pfam" id="PF00425">
    <property type="entry name" value="Chorismate_bind"/>
    <property type="match status" value="1"/>
</dbReference>
<dbReference type="PRINTS" id="PR00095">
    <property type="entry name" value="ANTSNTHASEI"/>
</dbReference>
<dbReference type="SUPFAM" id="SSF56322">
    <property type="entry name" value="ADC synthase"/>
    <property type="match status" value="1"/>
</dbReference>
<name>ASA1_ORYSJ</name>
<gene>
    <name evidence="5" type="primary">ASA1</name>
    <name evidence="5" type="synonym">OASA1</name>
    <name type="ordered locus">Os03g0826500</name>
    <name type="ordered locus">LOC_Os03g61120</name>
    <name evidence="7" type="ORF">OJ1111_B11.9</name>
    <name evidence="9" type="ORF">OsJ_13197</name>
    <name evidence="8" type="ORF">OSJNBa0010E04.11</name>
</gene>
<organism>
    <name type="scientific">Oryza sativa subsp. japonica</name>
    <name type="common">Rice</name>
    <dbReference type="NCBI Taxonomy" id="39947"/>
    <lineage>
        <taxon>Eukaryota</taxon>
        <taxon>Viridiplantae</taxon>
        <taxon>Streptophyta</taxon>
        <taxon>Embryophyta</taxon>
        <taxon>Tracheophyta</taxon>
        <taxon>Spermatophyta</taxon>
        <taxon>Magnoliopsida</taxon>
        <taxon>Liliopsida</taxon>
        <taxon>Poales</taxon>
        <taxon>Poaceae</taxon>
        <taxon>BOP clade</taxon>
        <taxon>Oryzoideae</taxon>
        <taxon>Oryzeae</taxon>
        <taxon>Oryzinae</taxon>
        <taxon>Oryza</taxon>
        <taxon>Oryza sativa</taxon>
    </lineage>
</organism>
<sequence length="577" mass="63866">MASLVLSLRIAPSTPPLGLGGGRFRGRRGAVACRAATFQQLDAVAVREEESKFKAGAAEGCNILPLKRCIFSDHLTPVLAYRCLVREDDREAPSFLFESVEQGSEGTNVGRYSVVGAQPAMEIVAKANHVTVMDHKMKSRREQFAPDPMKIPRSIMEQWNPQIVEGLPDAFCGGWVGFFSYDTVRYVETKKLPFSNAPEDDRNLPDIHLGLYNDIVVFDHVEKKTHVIHWVRVDCHESVDEAYEDGKNQLEALLSRLHSVNVPTLTAGSVKLNVGQFGSALQKSSMSREDYKKAVVQAKEHILAGDIFQVVLSQRFERRTFADPFEVYRALRIVNPSPYMAYLQARGCILVASSPEILTRVEKRTIVNRPLAGTIRRGKSKAEDKVLEQLLLSDGKQCAEHIMLVDLGRNDVGKVSKPGSVKVEKLMNVERYSHVMHISSTVTGELRDDLTCWDALRAALPVGTVSGAPKVRAMELIDQMEGKMRGPYSGGFGGVSFRGDMDIALALRTIVFPTGSRFDTMYSYTDKNARQEWVAHLQAGAGIVADSKPDDEHQECLNKAAGLARAIDLAESTFVDE</sequence>